<accession>Q97JF4</accession>
<comment type="function">
    <text evidence="1">Catalyzes the dehydration of D-mannonate.</text>
</comment>
<comment type="catalytic activity">
    <reaction evidence="1">
        <text>D-mannonate = 2-dehydro-3-deoxy-D-gluconate + H2O</text>
        <dbReference type="Rhea" id="RHEA:20097"/>
        <dbReference type="ChEBI" id="CHEBI:15377"/>
        <dbReference type="ChEBI" id="CHEBI:17767"/>
        <dbReference type="ChEBI" id="CHEBI:57990"/>
        <dbReference type="EC" id="4.2.1.8"/>
    </reaction>
</comment>
<comment type="cofactor">
    <cofactor evidence="1">
        <name>Fe(2+)</name>
        <dbReference type="ChEBI" id="CHEBI:29033"/>
    </cofactor>
    <cofactor evidence="1">
        <name>Mn(2+)</name>
        <dbReference type="ChEBI" id="CHEBI:29035"/>
    </cofactor>
</comment>
<comment type="pathway">
    <text evidence="1">Carbohydrate metabolism; pentose and glucuronate interconversion.</text>
</comment>
<comment type="similarity">
    <text evidence="1">Belongs to the mannonate dehydratase family.</text>
</comment>
<dbReference type="EC" id="4.2.1.8" evidence="1"/>
<dbReference type="EMBL" id="AE001437">
    <property type="protein sequence ID" value="AAK79300.1"/>
    <property type="molecule type" value="Genomic_DNA"/>
</dbReference>
<dbReference type="PIR" id="A97064">
    <property type="entry name" value="A97064"/>
</dbReference>
<dbReference type="RefSeq" id="NP_347960.1">
    <property type="nucleotide sequence ID" value="NC_003030.1"/>
</dbReference>
<dbReference type="RefSeq" id="WP_010964641.1">
    <property type="nucleotide sequence ID" value="NC_003030.1"/>
</dbReference>
<dbReference type="SMR" id="Q97JF4"/>
<dbReference type="STRING" id="272562.CA_C1332"/>
<dbReference type="GeneID" id="44997837"/>
<dbReference type="KEGG" id="cac:CA_C1332"/>
<dbReference type="PATRIC" id="fig|272562.8.peg.1537"/>
<dbReference type="eggNOG" id="COG1312">
    <property type="taxonomic scope" value="Bacteria"/>
</dbReference>
<dbReference type="HOGENOM" id="CLU_058621_1_0_9"/>
<dbReference type="OrthoDB" id="9780250at2"/>
<dbReference type="UniPathway" id="UPA00246"/>
<dbReference type="Proteomes" id="UP000000814">
    <property type="component" value="Chromosome"/>
</dbReference>
<dbReference type="GO" id="GO:0008198">
    <property type="term" value="F:ferrous iron binding"/>
    <property type="evidence" value="ECO:0007669"/>
    <property type="project" value="TreeGrafter"/>
</dbReference>
<dbReference type="GO" id="GO:0030145">
    <property type="term" value="F:manganese ion binding"/>
    <property type="evidence" value="ECO:0007669"/>
    <property type="project" value="TreeGrafter"/>
</dbReference>
<dbReference type="GO" id="GO:0008927">
    <property type="term" value="F:mannonate dehydratase activity"/>
    <property type="evidence" value="ECO:0007669"/>
    <property type="project" value="UniProtKB-UniRule"/>
</dbReference>
<dbReference type="GO" id="GO:0042840">
    <property type="term" value="P:D-glucuronate catabolic process"/>
    <property type="evidence" value="ECO:0007669"/>
    <property type="project" value="TreeGrafter"/>
</dbReference>
<dbReference type="Gene3D" id="3.20.20.150">
    <property type="entry name" value="Divalent-metal-dependent TIM barrel enzymes"/>
    <property type="match status" value="1"/>
</dbReference>
<dbReference type="HAMAP" id="MF_00106">
    <property type="entry name" value="UxuA"/>
    <property type="match status" value="1"/>
</dbReference>
<dbReference type="InterPro" id="IPR004628">
    <property type="entry name" value="Man_deHydtase"/>
</dbReference>
<dbReference type="InterPro" id="IPR036237">
    <property type="entry name" value="Xyl_isomerase-like_sf"/>
</dbReference>
<dbReference type="NCBIfam" id="NF003027">
    <property type="entry name" value="PRK03906.1"/>
    <property type="match status" value="2"/>
</dbReference>
<dbReference type="NCBIfam" id="TIGR00695">
    <property type="entry name" value="uxuA"/>
    <property type="match status" value="1"/>
</dbReference>
<dbReference type="PANTHER" id="PTHR30387">
    <property type="entry name" value="MANNONATE DEHYDRATASE"/>
    <property type="match status" value="1"/>
</dbReference>
<dbReference type="PANTHER" id="PTHR30387:SF2">
    <property type="entry name" value="MANNONATE DEHYDRATASE"/>
    <property type="match status" value="1"/>
</dbReference>
<dbReference type="Pfam" id="PF03786">
    <property type="entry name" value="UxuA"/>
    <property type="match status" value="1"/>
</dbReference>
<dbReference type="PIRSF" id="PIRSF016049">
    <property type="entry name" value="Man_dehyd"/>
    <property type="match status" value="1"/>
</dbReference>
<dbReference type="SUPFAM" id="SSF51658">
    <property type="entry name" value="Xylose isomerase-like"/>
    <property type="match status" value="1"/>
</dbReference>
<gene>
    <name evidence="1" type="primary">uxuA</name>
    <name type="ordered locus">CA_C1332</name>
</gene>
<feature type="chain" id="PRO_0000170668" description="Mannonate dehydratase">
    <location>
        <begin position="1"/>
        <end position="351"/>
    </location>
</feature>
<keyword id="KW-0408">Iron</keyword>
<keyword id="KW-0456">Lyase</keyword>
<keyword id="KW-0464">Manganese</keyword>
<keyword id="KW-1185">Reference proteome</keyword>
<organism>
    <name type="scientific">Clostridium acetobutylicum (strain ATCC 824 / DSM 792 / JCM 1419 / IAM 19013 / LMG 5710 / NBRC 13948 / NRRL B-527 / VKM B-1787 / 2291 / W)</name>
    <dbReference type="NCBI Taxonomy" id="272562"/>
    <lineage>
        <taxon>Bacteria</taxon>
        <taxon>Bacillati</taxon>
        <taxon>Bacillota</taxon>
        <taxon>Clostridia</taxon>
        <taxon>Eubacteriales</taxon>
        <taxon>Clostridiaceae</taxon>
        <taxon>Clostridium</taxon>
    </lineage>
</organism>
<protein>
    <recommendedName>
        <fullName evidence="1">Mannonate dehydratase</fullName>
        <ecNumber evidence="1">4.2.1.8</ecNumber>
    </recommendedName>
    <alternativeName>
        <fullName evidence="1">D-mannonate hydro-lyase</fullName>
    </alternativeName>
</protein>
<evidence type="ECO:0000255" key="1">
    <source>
        <dbReference type="HAMAP-Rule" id="MF_00106"/>
    </source>
</evidence>
<sequence length="351" mass="40460">MNLSFRWYGADDAVKLQYIRQIPSIKSIVTAIYDVPVGEKWSIEAILKLKNEVESYGLNFDVIESVPVHEDIKLGLKTRDKYIENYKENIRNLSKAGVKVICYNFMPIFDWTRTQVDKVLDDGSTTLVYYKNQLKKMDPLTGELSLPGWDSSYTKDQLSSLFEKYQNVDQEVLWSNLEYFLKQIIPVAEECDVKMAIHPDDPPYNIFGLPRIITNEQNLDRFLKIVDSKYNGLTFCTGSLGCASFNDVVKMVDKYSSQGRIHFMHVRNVKLLFDGSFEESAHYSPCGSLDIVEIMKVLHKNKFDGYIRPDHGRMIWGETGRPGYGLYDRALGAMYITGIWETLEKISKEDK</sequence>
<proteinExistence type="inferred from homology"/>
<reference key="1">
    <citation type="journal article" date="2001" name="J. Bacteriol.">
        <title>Genome sequence and comparative analysis of the solvent-producing bacterium Clostridium acetobutylicum.</title>
        <authorList>
            <person name="Noelling J."/>
            <person name="Breton G."/>
            <person name="Omelchenko M.V."/>
            <person name="Makarova K.S."/>
            <person name="Zeng Q."/>
            <person name="Gibson R."/>
            <person name="Lee H.M."/>
            <person name="Dubois J."/>
            <person name="Qiu D."/>
            <person name="Hitti J."/>
            <person name="Wolf Y.I."/>
            <person name="Tatusov R.L."/>
            <person name="Sabathe F."/>
            <person name="Doucette-Stamm L.A."/>
            <person name="Soucaille P."/>
            <person name="Daly M.J."/>
            <person name="Bennett G.N."/>
            <person name="Koonin E.V."/>
            <person name="Smith D.R."/>
        </authorList>
    </citation>
    <scope>NUCLEOTIDE SEQUENCE [LARGE SCALE GENOMIC DNA]</scope>
    <source>
        <strain>ATCC 824 / DSM 792 / JCM 1419 / IAM 19013 / LMG 5710 / NBRC 13948 / NRRL B-527 / VKM B-1787 / 2291 / W</strain>
    </source>
</reference>
<name>UXUA_CLOAB</name>